<keyword id="KW-0021">Allosteric enzyme</keyword>
<keyword id="KW-0963">Cytoplasm</keyword>
<keyword id="KW-0378">Hydrolase</keyword>
<keyword id="KW-0479">Metal-binding</keyword>
<keyword id="KW-0645">Protease</keyword>
<keyword id="KW-0915">Sodium</keyword>
<keyword id="KW-0888">Threonine protease</keyword>
<gene>
    <name evidence="1" type="primary">hslV</name>
    <name type="ordered locus">XAC0637</name>
</gene>
<feature type="chain" id="PRO_0000148164" description="ATP-dependent protease subunit HslV">
    <location>
        <begin position="1"/>
        <end position="183"/>
    </location>
</feature>
<feature type="active site" evidence="1">
    <location>
        <position position="13"/>
    </location>
</feature>
<feature type="binding site" evidence="1">
    <location>
        <position position="168"/>
    </location>
    <ligand>
        <name>Na(+)</name>
        <dbReference type="ChEBI" id="CHEBI:29101"/>
    </ligand>
</feature>
<feature type="binding site" evidence="1">
    <location>
        <position position="171"/>
    </location>
    <ligand>
        <name>Na(+)</name>
        <dbReference type="ChEBI" id="CHEBI:29101"/>
    </ligand>
</feature>
<feature type="binding site" evidence="1">
    <location>
        <position position="174"/>
    </location>
    <ligand>
        <name>Na(+)</name>
        <dbReference type="ChEBI" id="CHEBI:29101"/>
    </ligand>
</feature>
<sequence length="183" mass="19279">MDPSQNPNIVHATTIISVRRGGHVAVAGDGQVTLGHTVMKGNARKVRRLGREGQVLAGFAGAAADAFTLFELFEAKLDKHGQLTRAAVELAKDWRTERRLGKLEALLAVADKETSLIISGTGDVVEPEDGIIAIGSGGSYALSAARALLAHTQLDAKTIAAEAINIAGDICIYTNRNVVVEEL</sequence>
<accession>Q8PPP8</accession>
<evidence type="ECO:0000255" key="1">
    <source>
        <dbReference type="HAMAP-Rule" id="MF_00248"/>
    </source>
</evidence>
<comment type="function">
    <text evidence="1">Protease subunit of a proteasome-like degradation complex believed to be a general protein degrading machinery.</text>
</comment>
<comment type="catalytic activity">
    <reaction evidence="1">
        <text>ATP-dependent cleavage of peptide bonds with broad specificity.</text>
        <dbReference type="EC" id="3.4.25.2"/>
    </reaction>
</comment>
<comment type="activity regulation">
    <text evidence="1">Allosterically activated by HslU binding.</text>
</comment>
<comment type="subunit">
    <text evidence="1">A double ring-shaped homohexamer of HslV is capped on each side by a ring-shaped HslU homohexamer. The assembly of the HslU/HslV complex is dependent on binding of ATP.</text>
</comment>
<comment type="subcellular location">
    <subcellularLocation>
        <location evidence="1">Cytoplasm</location>
    </subcellularLocation>
</comment>
<comment type="similarity">
    <text evidence="1">Belongs to the peptidase T1B family. HslV subfamily.</text>
</comment>
<dbReference type="EC" id="3.4.25.2" evidence="1"/>
<dbReference type="EMBL" id="AE008923">
    <property type="protein sequence ID" value="AAM35526.1"/>
    <property type="molecule type" value="Genomic_DNA"/>
</dbReference>
<dbReference type="RefSeq" id="WP_011050447.1">
    <property type="nucleotide sequence ID" value="NC_003919.1"/>
</dbReference>
<dbReference type="SMR" id="Q8PPP8"/>
<dbReference type="MEROPS" id="T01.006"/>
<dbReference type="GeneID" id="66909835"/>
<dbReference type="KEGG" id="xac:XAC0637"/>
<dbReference type="eggNOG" id="COG5405">
    <property type="taxonomic scope" value="Bacteria"/>
</dbReference>
<dbReference type="HOGENOM" id="CLU_093872_1_0_6"/>
<dbReference type="Proteomes" id="UP000000576">
    <property type="component" value="Chromosome"/>
</dbReference>
<dbReference type="GO" id="GO:0009376">
    <property type="term" value="C:HslUV protease complex"/>
    <property type="evidence" value="ECO:0007669"/>
    <property type="project" value="UniProtKB-UniRule"/>
</dbReference>
<dbReference type="GO" id="GO:0005839">
    <property type="term" value="C:proteasome core complex"/>
    <property type="evidence" value="ECO:0007669"/>
    <property type="project" value="InterPro"/>
</dbReference>
<dbReference type="GO" id="GO:0046872">
    <property type="term" value="F:metal ion binding"/>
    <property type="evidence" value="ECO:0007669"/>
    <property type="project" value="UniProtKB-KW"/>
</dbReference>
<dbReference type="GO" id="GO:0004298">
    <property type="term" value="F:threonine-type endopeptidase activity"/>
    <property type="evidence" value="ECO:0007669"/>
    <property type="project" value="UniProtKB-KW"/>
</dbReference>
<dbReference type="GO" id="GO:0051603">
    <property type="term" value="P:proteolysis involved in protein catabolic process"/>
    <property type="evidence" value="ECO:0007669"/>
    <property type="project" value="InterPro"/>
</dbReference>
<dbReference type="FunFam" id="3.60.20.10:FF:000002">
    <property type="entry name" value="ATP-dependent protease subunit HslV"/>
    <property type="match status" value="1"/>
</dbReference>
<dbReference type="Gene3D" id="3.60.20.10">
    <property type="entry name" value="Glutamine Phosphoribosylpyrophosphate, subunit 1, domain 1"/>
    <property type="match status" value="1"/>
</dbReference>
<dbReference type="HAMAP" id="MF_00248">
    <property type="entry name" value="HslV"/>
    <property type="match status" value="1"/>
</dbReference>
<dbReference type="InterPro" id="IPR022281">
    <property type="entry name" value="ATP-dep_Prtase_HsIV_su"/>
</dbReference>
<dbReference type="InterPro" id="IPR029055">
    <property type="entry name" value="Ntn_hydrolases_N"/>
</dbReference>
<dbReference type="InterPro" id="IPR001353">
    <property type="entry name" value="Proteasome_sua/b"/>
</dbReference>
<dbReference type="InterPro" id="IPR023333">
    <property type="entry name" value="Proteasome_suB-type"/>
</dbReference>
<dbReference type="NCBIfam" id="TIGR03692">
    <property type="entry name" value="ATP_dep_HslV"/>
    <property type="match status" value="1"/>
</dbReference>
<dbReference type="NCBIfam" id="NF003964">
    <property type="entry name" value="PRK05456.1"/>
    <property type="match status" value="1"/>
</dbReference>
<dbReference type="PANTHER" id="PTHR32194:SF0">
    <property type="entry name" value="ATP-DEPENDENT PROTEASE SUBUNIT HSLV"/>
    <property type="match status" value="1"/>
</dbReference>
<dbReference type="PANTHER" id="PTHR32194">
    <property type="entry name" value="METALLOPROTEASE TLDD"/>
    <property type="match status" value="1"/>
</dbReference>
<dbReference type="Pfam" id="PF00227">
    <property type="entry name" value="Proteasome"/>
    <property type="match status" value="1"/>
</dbReference>
<dbReference type="PIRSF" id="PIRSF039093">
    <property type="entry name" value="HslV"/>
    <property type="match status" value="1"/>
</dbReference>
<dbReference type="SUPFAM" id="SSF56235">
    <property type="entry name" value="N-terminal nucleophile aminohydrolases (Ntn hydrolases)"/>
    <property type="match status" value="1"/>
</dbReference>
<dbReference type="PROSITE" id="PS51476">
    <property type="entry name" value="PROTEASOME_BETA_2"/>
    <property type="match status" value="1"/>
</dbReference>
<organism>
    <name type="scientific">Xanthomonas axonopodis pv. citri (strain 306)</name>
    <dbReference type="NCBI Taxonomy" id="190486"/>
    <lineage>
        <taxon>Bacteria</taxon>
        <taxon>Pseudomonadati</taxon>
        <taxon>Pseudomonadota</taxon>
        <taxon>Gammaproteobacteria</taxon>
        <taxon>Lysobacterales</taxon>
        <taxon>Lysobacteraceae</taxon>
        <taxon>Xanthomonas</taxon>
    </lineage>
</organism>
<proteinExistence type="inferred from homology"/>
<protein>
    <recommendedName>
        <fullName evidence="1">ATP-dependent protease subunit HslV</fullName>
        <ecNumber evidence="1">3.4.25.2</ecNumber>
    </recommendedName>
</protein>
<name>HSLV_XANAC</name>
<reference key="1">
    <citation type="journal article" date="2002" name="Nature">
        <title>Comparison of the genomes of two Xanthomonas pathogens with differing host specificities.</title>
        <authorList>
            <person name="da Silva A.C.R."/>
            <person name="Ferro J.A."/>
            <person name="Reinach F.C."/>
            <person name="Farah C.S."/>
            <person name="Furlan L.R."/>
            <person name="Quaggio R.B."/>
            <person name="Monteiro-Vitorello C.B."/>
            <person name="Van Sluys M.A."/>
            <person name="Almeida N.F. Jr."/>
            <person name="Alves L.M.C."/>
            <person name="do Amaral A.M."/>
            <person name="Bertolini M.C."/>
            <person name="Camargo L.E.A."/>
            <person name="Camarotte G."/>
            <person name="Cannavan F."/>
            <person name="Cardozo J."/>
            <person name="Chambergo F."/>
            <person name="Ciapina L.P."/>
            <person name="Cicarelli R.M.B."/>
            <person name="Coutinho L.L."/>
            <person name="Cursino-Santos J.R."/>
            <person name="El-Dorry H."/>
            <person name="Faria J.B."/>
            <person name="Ferreira A.J.S."/>
            <person name="Ferreira R.C.C."/>
            <person name="Ferro M.I.T."/>
            <person name="Formighieri E.F."/>
            <person name="Franco M.C."/>
            <person name="Greggio C.C."/>
            <person name="Gruber A."/>
            <person name="Katsuyama A.M."/>
            <person name="Kishi L.T."/>
            <person name="Leite R.P."/>
            <person name="Lemos E.G.M."/>
            <person name="Lemos M.V.F."/>
            <person name="Locali E.C."/>
            <person name="Machado M.A."/>
            <person name="Madeira A.M.B.N."/>
            <person name="Martinez-Rossi N.M."/>
            <person name="Martins E.C."/>
            <person name="Meidanis J."/>
            <person name="Menck C.F.M."/>
            <person name="Miyaki C.Y."/>
            <person name="Moon D.H."/>
            <person name="Moreira L.M."/>
            <person name="Novo M.T.M."/>
            <person name="Okura V.K."/>
            <person name="Oliveira M.C."/>
            <person name="Oliveira V.R."/>
            <person name="Pereira H.A."/>
            <person name="Rossi A."/>
            <person name="Sena J.A.D."/>
            <person name="Silva C."/>
            <person name="de Souza R.F."/>
            <person name="Spinola L.A.F."/>
            <person name="Takita M.A."/>
            <person name="Tamura R.E."/>
            <person name="Teixeira E.C."/>
            <person name="Tezza R.I.D."/>
            <person name="Trindade dos Santos M."/>
            <person name="Truffi D."/>
            <person name="Tsai S.M."/>
            <person name="White F.F."/>
            <person name="Setubal J.C."/>
            <person name="Kitajima J.P."/>
        </authorList>
    </citation>
    <scope>NUCLEOTIDE SEQUENCE [LARGE SCALE GENOMIC DNA]</scope>
    <source>
        <strain>306</strain>
    </source>
</reference>